<proteinExistence type="evidence at protein level"/>
<sequence length="334" mass="35019">MTVRIGINGFGRIGRNVFRAAAARSSELEIVAVNDLGDVPTMAHLLAYDSILGRFPEEVTAEPGAIRVGDRTIKVLAERDPGALPWGDLGVDIVIESTGIFTDAAKARSHVDGGAKKVIIAAPASGEDFTVVLGVNDGDYDPERHTIISNASCTTNCLGVLAKVLHDAVGIDSGMMTTVHAYTQDQNLQDAPHKDLRRARAAALNIVPTSSGAAKAIGLVLPELAGRLDAFALRVPVPTGSVTDLTVTTRRGTSVEEVKEAYAAAASGPYKGLLSYVDAPLVSTDIVGDPASCVFDAGLTRVSGPQVKVVGWYDNEWGYSNRLIDLATLIGSSL</sequence>
<keyword id="KW-0963">Cytoplasm</keyword>
<keyword id="KW-0324">Glycolysis</keyword>
<keyword id="KW-0520">NAD</keyword>
<keyword id="KW-0547">Nucleotide-binding</keyword>
<keyword id="KW-0560">Oxidoreductase</keyword>
<evidence type="ECO:0000250" key="1">
    <source>
        <dbReference type="UniProtKB" id="P00362"/>
    </source>
</evidence>
<evidence type="ECO:0000269" key="2">
    <source>
    </source>
</evidence>
<evidence type="ECO:0000303" key="3">
    <source>
    </source>
</evidence>
<evidence type="ECO:0000305" key="4"/>
<feature type="chain" id="PRO_0000433909" description="Glyceraldehyde-3-phosphate dehydrogenase 2">
    <location>
        <begin position="1"/>
        <end position="334"/>
    </location>
</feature>
<feature type="active site" description="Nucleophile" evidence="1">
    <location>
        <position position="153"/>
    </location>
</feature>
<feature type="binding site" evidence="1">
    <location>
        <begin position="12"/>
        <end position="13"/>
    </location>
    <ligand>
        <name>NAD(+)</name>
        <dbReference type="ChEBI" id="CHEBI:57540"/>
    </ligand>
</feature>
<feature type="binding site" evidence="1">
    <location>
        <position position="35"/>
    </location>
    <ligand>
        <name>NAD(+)</name>
        <dbReference type="ChEBI" id="CHEBI:57540"/>
    </ligand>
</feature>
<feature type="binding site" evidence="1">
    <location>
        <position position="79"/>
    </location>
    <ligand>
        <name>NAD(+)</name>
        <dbReference type="ChEBI" id="CHEBI:57540"/>
    </ligand>
</feature>
<feature type="binding site" evidence="1">
    <location>
        <begin position="152"/>
        <end position="154"/>
    </location>
    <ligand>
        <name>D-glyceraldehyde 3-phosphate</name>
        <dbReference type="ChEBI" id="CHEBI:59776"/>
    </ligand>
</feature>
<feature type="binding site" evidence="1">
    <location>
        <position position="183"/>
    </location>
    <ligand>
        <name>D-glyceraldehyde 3-phosphate</name>
        <dbReference type="ChEBI" id="CHEBI:59776"/>
    </ligand>
</feature>
<feature type="binding site" evidence="1">
    <location>
        <position position="198"/>
    </location>
    <ligand>
        <name>D-glyceraldehyde 3-phosphate</name>
        <dbReference type="ChEBI" id="CHEBI:59776"/>
    </ligand>
</feature>
<feature type="binding site" evidence="1">
    <location>
        <begin position="211"/>
        <end position="212"/>
    </location>
    <ligand>
        <name>D-glyceraldehyde 3-phosphate</name>
        <dbReference type="ChEBI" id="CHEBI:59776"/>
    </ligand>
</feature>
<feature type="binding site" evidence="1">
    <location>
        <position position="234"/>
    </location>
    <ligand>
        <name>D-glyceraldehyde 3-phosphate</name>
        <dbReference type="ChEBI" id="CHEBI:59776"/>
    </ligand>
</feature>
<feature type="binding site" evidence="1">
    <location>
        <position position="315"/>
    </location>
    <ligand>
        <name>NAD(+)</name>
        <dbReference type="ChEBI" id="CHEBI:57540"/>
    </ligand>
</feature>
<feature type="site" description="Activates thiol group during catalysis" evidence="1">
    <location>
        <position position="180"/>
    </location>
</feature>
<reference key="1">
    <citation type="journal article" date="2011" name="J. Am. Chem. Soc.">
        <title>Genome mining in streptomyces. Discovery of an unprecedented P450-catalyzed oxidative rearrangement that is the final step in the biosynthesis of pentalenolactone.</title>
        <authorList>
            <person name="Zhu D."/>
            <person name="Seo M.J."/>
            <person name="Ikeda H."/>
            <person name="Cane D.E."/>
        </authorList>
    </citation>
    <scope>NUCLEOTIDE SEQUENCE [GENOMIC DNA]</scope>
    <source>
        <strain>Tu469</strain>
    </source>
</reference>
<reference key="2">
    <citation type="journal article" date="1983" name="J. Bacteriol.">
        <title>Characterization of two glyceraldehyde-3-phosphate dehydrogenase isoenzymes from the pentalenolactone producer Streptomyces arenae.</title>
        <authorList>
            <person name="Maurer K.H."/>
            <person name="Pfeiffer F."/>
            <person name="Zehender H."/>
            <person name="Mecke D."/>
        </authorList>
    </citation>
    <scope>FUNCTION</scope>
    <scope>CATALYTIC ACTIVITY</scope>
    <scope>BIOPHYSICOCHEMICAL PROPERTIES</scope>
    <scope>ACTIVITY REGULATION</scope>
    <scope>INDUCTION</scope>
    <scope>SUBUNIT</scope>
    <source>
        <strain>Tu469</strain>
    </source>
</reference>
<comment type="function">
    <text evidence="2">Catalyzes the oxidative phosphorylation of glyceraldehyde 3-phosphate (G3P) to 1,3-bisphosphoglycerate (BPG) using the cofactor NAD. The first reaction step involves the formation of a hemiacetal intermediate between G3P and a cysteine residue, and this hemiacetal intermediate is then oxidized to a thioester, with concomitant reduction of NAD to NADH. The reduced NADH is then exchanged with the second NAD, and the thioester is attacked by a nucleophilic inorganic phosphate to produce BPG.</text>
</comment>
<comment type="catalytic activity">
    <reaction evidence="2">
        <text>D-glyceraldehyde 3-phosphate + phosphate + NAD(+) = (2R)-3-phospho-glyceroyl phosphate + NADH + H(+)</text>
        <dbReference type="Rhea" id="RHEA:10300"/>
        <dbReference type="ChEBI" id="CHEBI:15378"/>
        <dbReference type="ChEBI" id="CHEBI:43474"/>
        <dbReference type="ChEBI" id="CHEBI:57540"/>
        <dbReference type="ChEBI" id="CHEBI:57604"/>
        <dbReference type="ChEBI" id="CHEBI:57945"/>
        <dbReference type="ChEBI" id="CHEBI:59776"/>
        <dbReference type="EC" id="1.2.1.12"/>
    </reaction>
</comment>
<comment type="activity regulation">
    <text evidence="2">Inhibited by pentalenolactone (PL).</text>
</comment>
<comment type="biophysicochemical properties">
    <kinetics>
        <KM evidence="2">110 uM for NAD (at pH 8 and 26 degrees Celsius)</KM>
        <KM evidence="2">250 uM for G3P (at pH 8 and 26 degrees Celsius)</KM>
    </kinetics>
</comment>
<comment type="pathway">
    <text evidence="4">Carbohydrate degradation; glycolysis; pyruvate from D-glyceraldehyde 3-phosphate: step 1/5.</text>
</comment>
<comment type="subunit">
    <text evidence="2">Homotetramer.</text>
</comment>
<comment type="subcellular location">
    <subcellularLocation>
        <location evidence="4">Cytoplasm</location>
    </subcellularLocation>
</comment>
<comment type="induction">
    <text evidence="2">In the absence of pentalenolactone (PL).</text>
</comment>
<comment type="similarity">
    <text evidence="4">Belongs to the glyceraldehyde-3-phosphate dehydrogenase family.</text>
</comment>
<name>G3P2_STRAE</name>
<gene>
    <name type="primary">gap2</name>
    <name type="synonym">gapR</name>
</gene>
<organism>
    <name type="scientific">Streptomyces arenae</name>
    <dbReference type="NCBI Taxonomy" id="29301"/>
    <lineage>
        <taxon>Bacteria</taxon>
        <taxon>Bacillati</taxon>
        <taxon>Actinomycetota</taxon>
        <taxon>Actinomycetes</taxon>
        <taxon>Kitasatosporales</taxon>
        <taxon>Streptomycetaceae</taxon>
        <taxon>Streptomyces</taxon>
    </lineage>
</organism>
<protein>
    <recommendedName>
        <fullName evidence="3">Glyceraldehyde-3-phosphate dehydrogenase 2</fullName>
        <shortName evidence="3">GAPDH 2</shortName>
        <ecNumber evidence="2">1.2.1.12</ecNumber>
    </recommendedName>
    <alternativeName>
        <fullName evidence="3">NAD-dependent glyceraldehyde-3-phosphate dehydrogenase</fullName>
    </alternativeName>
    <alternativeName>
        <fullName evidence="3">PL-sensitive glyceraldehyde-3-phosphate dehydrogenase</fullName>
    </alternativeName>
</protein>
<accession>E3VWI2</accession>
<dbReference type="EC" id="1.2.1.12" evidence="2"/>
<dbReference type="EMBL" id="HQ292065">
    <property type="protein sequence ID" value="ADO85570.1"/>
    <property type="molecule type" value="Genomic_DNA"/>
</dbReference>
<dbReference type="SMR" id="E3VWI2"/>
<dbReference type="UniPathway" id="UPA00109">
    <property type="reaction ID" value="UER00184"/>
</dbReference>
<dbReference type="GO" id="GO:0005737">
    <property type="term" value="C:cytoplasm"/>
    <property type="evidence" value="ECO:0007669"/>
    <property type="project" value="UniProtKB-SubCell"/>
</dbReference>
<dbReference type="GO" id="GO:0004365">
    <property type="term" value="F:glyceraldehyde-3-phosphate dehydrogenase (NAD+) (phosphorylating) activity"/>
    <property type="evidence" value="ECO:0000314"/>
    <property type="project" value="UniProtKB"/>
</dbReference>
<dbReference type="GO" id="GO:0051287">
    <property type="term" value="F:NAD binding"/>
    <property type="evidence" value="ECO:0000250"/>
    <property type="project" value="UniProtKB"/>
</dbReference>
<dbReference type="GO" id="GO:0050661">
    <property type="term" value="F:NADP binding"/>
    <property type="evidence" value="ECO:0007669"/>
    <property type="project" value="InterPro"/>
</dbReference>
<dbReference type="GO" id="GO:0006006">
    <property type="term" value="P:glucose metabolic process"/>
    <property type="evidence" value="ECO:0007669"/>
    <property type="project" value="InterPro"/>
</dbReference>
<dbReference type="GO" id="GO:0006096">
    <property type="term" value="P:glycolytic process"/>
    <property type="evidence" value="ECO:0007669"/>
    <property type="project" value="UniProtKB-UniPathway"/>
</dbReference>
<dbReference type="CDD" id="cd18126">
    <property type="entry name" value="GAPDH_I_C"/>
    <property type="match status" value="1"/>
</dbReference>
<dbReference type="CDD" id="cd05214">
    <property type="entry name" value="GAPDH_I_N"/>
    <property type="match status" value="1"/>
</dbReference>
<dbReference type="FunFam" id="3.30.360.10:FF:000002">
    <property type="entry name" value="Glyceraldehyde-3-phosphate dehydrogenase"/>
    <property type="match status" value="1"/>
</dbReference>
<dbReference type="FunFam" id="3.40.50.720:FF:000001">
    <property type="entry name" value="Glyceraldehyde-3-phosphate dehydrogenase"/>
    <property type="match status" value="1"/>
</dbReference>
<dbReference type="Gene3D" id="3.30.360.10">
    <property type="entry name" value="Dihydrodipicolinate Reductase, domain 2"/>
    <property type="match status" value="1"/>
</dbReference>
<dbReference type="Gene3D" id="3.40.50.720">
    <property type="entry name" value="NAD(P)-binding Rossmann-like Domain"/>
    <property type="match status" value="1"/>
</dbReference>
<dbReference type="InterPro" id="IPR020831">
    <property type="entry name" value="GlycerAld/Erythrose_P_DH"/>
</dbReference>
<dbReference type="InterPro" id="IPR020830">
    <property type="entry name" value="GlycerAld_3-P_DH_AS"/>
</dbReference>
<dbReference type="InterPro" id="IPR020829">
    <property type="entry name" value="GlycerAld_3-P_DH_cat"/>
</dbReference>
<dbReference type="InterPro" id="IPR020828">
    <property type="entry name" value="GlycerAld_3-P_DH_NAD(P)-bd"/>
</dbReference>
<dbReference type="InterPro" id="IPR006424">
    <property type="entry name" value="Glyceraldehyde-3-P_DH_1"/>
</dbReference>
<dbReference type="InterPro" id="IPR036291">
    <property type="entry name" value="NAD(P)-bd_dom_sf"/>
</dbReference>
<dbReference type="NCBIfam" id="TIGR01534">
    <property type="entry name" value="GAPDH-I"/>
    <property type="match status" value="1"/>
</dbReference>
<dbReference type="PANTHER" id="PTHR43148">
    <property type="entry name" value="GLYCERALDEHYDE-3-PHOSPHATE DEHYDROGENASE 2"/>
    <property type="match status" value="1"/>
</dbReference>
<dbReference type="Pfam" id="PF02800">
    <property type="entry name" value="Gp_dh_C"/>
    <property type="match status" value="1"/>
</dbReference>
<dbReference type="Pfam" id="PF00044">
    <property type="entry name" value="Gp_dh_N"/>
    <property type="match status" value="1"/>
</dbReference>
<dbReference type="PIRSF" id="PIRSF000149">
    <property type="entry name" value="GAP_DH"/>
    <property type="match status" value="1"/>
</dbReference>
<dbReference type="PRINTS" id="PR00078">
    <property type="entry name" value="G3PDHDRGNASE"/>
</dbReference>
<dbReference type="SMART" id="SM00846">
    <property type="entry name" value="Gp_dh_N"/>
    <property type="match status" value="1"/>
</dbReference>
<dbReference type="SUPFAM" id="SSF55347">
    <property type="entry name" value="Glyceraldehyde-3-phosphate dehydrogenase-like, C-terminal domain"/>
    <property type="match status" value="1"/>
</dbReference>
<dbReference type="SUPFAM" id="SSF51735">
    <property type="entry name" value="NAD(P)-binding Rossmann-fold domains"/>
    <property type="match status" value="1"/>
</dbReference>
<dbReference type="PROSITE" id="PS00071">
    <property type="entry name" value="GAPDH"/>
    <property type="match status" value="1"/>
</dbReference>